<comment type="subcellular location">
    <subcellularLocation>
        <location evidence="2">Cytoplasm</location>
    </subcellularLocation>
    <subcellularLocation>
        <location evidence="2">Nucleus</location>
    </subcellularLocation>
</comment>
<sequence>MSVSTKRLEMDEEAEEAFDLFDVTHKGYIDFEDLRRSCAQLGENLTKEQLQLMLDLAGTNGKVSREEFAELWIHIS</sequence>
<feature type="chain" id="PRO_0000310331" description="Uncharacterized calcium-binding protein C1687.14c">
    <location>
        <begin position="1"/>
        <end position="76"/>
    </location>
</feature>
<feature type="domain" description="EF-hand 1" evidence="1">
    <location>
        <begin position="9"/>
        <end position="44"/>
    </location>
</feature>
<feature type="domain" description="EF-hand 2" evidence="1">
    <location>
        <begin position="43"/>
        <end position="76"/>
    </location>
</feature>
<reference key="1">
    <citation type="journal article" date="2002" name="Nature">
        <title>The genome sequence of Schizosaccharomyces pombe.</title>
        <authorList>
            <person name="Wood V."/>
            <person name="Gwilliam R."/>
            <person name="Rajandream M.A."/>
            <person name="Lyne M.H."/>
            <person name="Lyne R."/>
            <person name="Stewart A."/>
            <person name="Sgouros J.G."/>
            <person name="Peat N."/>
            <person name="Hayles J."/>
            <person name="Baker S.G."/>
            <person name="Basham D."/>
            <person name="Bowman S."/>
            <person name="Brooks K."/>
            <person name="Brown D."/>
            <person name="Brown S."/>
            <person name="Chillingworth T."/>
            <person name="Churcher C.M."/>
            <person name="Collins M."/>
            <person name="Connor R."/>
            <person name="Cronin A."/>
            <person name="Davis P."/>
            <person name="Feltwell T."/>
            <person name="Fraser A."/>
            <person name="Gentles S."/>
            <person name="Goble A."/>
            <person name="Hamlin N."/>
            <person name="Harris D.E."/>
            <person name="Hidalgo J."/>
            <person name="Hodgson G."/>
            <person name="Holroyd S."/>
            <person name="Hornsby T."/>
            <person name="Howarth S."/>
            <person name="Huckle E.J."/>
            <person name="Hunt S."/>
            <person name="Jagels K."/>
            <person name="James K.D."/>
            <person name="Jones L."/>
            <person name="Jones M."/>
            <person name="Leather S."/>
            <person name="McDonald S."/>
            <person name="McLean J."/>
            <person name="Mooney P."/>
            <person name="Moule S."/>
            <person name="Mungall K.L."/>
            <person name="Murphy L.D."/>
            <person name="Niblett D."/>
            <person name="Odell C."/>
            <person name="Oliver K."/>
            <person name="O'Neil S."/>
            <person name="Pearson D."/>
            <person name="Quail M.A."/>
            <person name="Rabbinowitsch E."/>
            <person name="Rutherford K.M."/>
            <person name="Rutter S."/>
            <person name="Saunders D."/>
            <person name="Seeger K."/>
            <person name="Sharp S."/>
            <person name="Skelton J."/>
            <person name="Simmonds M.N."/>
            <person name="Squares R."/>
            <person name="Squares S."/>
            <person name="Stevens K."/>
            <person name="Taylor K."/>
            <person name="Taylor R.G."/>
            <person name="Tivey A."/>
            <person name="Walsh S.V."/>
            <person name="Warren T."/>
            <person name="Whitehead S."/>
            <person name="Woodward J.R."/>
            <person name="Volckaert G."/>
            <person name="Aert R."/>
            <person name="Robben J."/>
            <person name="Grymonprez B."/>
            <person name="Weltjens I."/>
            <person name="Vanstreels E."/>
            <person name="Rieger M."/>
            <person name="Schaefer M."/>
            <person name="Mueller-Auer S."/>
            <person name="Gabel C."/>
            <person name="Fuchs M."/>
            <person name="Duesterhoeft A."/>
            <person name="Fritzc C."/>
            <person name="Holzer E."/>
            <person name="Moestl D."/>
            <person name="Hilbert H."/>
            <person name="Borzym K."/>
            <person name="Langer I."/>
            <person name="Beck A."/>
            <person name="Lehrach H."/>
            <person name="Reinhardt R."/>
            <person name="Pohl T.M."/>
            <person name="Eger P."/>
            <person name="Zimmermann W."/>
            <person name="Wedler H."/>
            <person name="Wambutt R."/>
            <person name="Purnelle B."/>
            <person name="Goffeau A."/>
            <person name="Cadieu E."/>
            <person name="Dreano S."/>
            <person name="Gloux S."/>
            <person name="Lelaure V."/>
            <person name="Mottier S."/>
            <person name="Galibert F."/>
            <person name="Aves S.J."/>
            <person name="Xiang Z."/>
            <person name="Hunt C."/>
            <person name="Moore K."/>
            <person name="Hurst S.M."/>
            <person name="Lucas M."/>
            <person name="Rochet M."/>
            <person name="Gaillardin C."/>
            <person name="Tallada V.A."/>
            <person name="Garzon A."/>
            <person name="Thode G."/>
            <person name="Daga R.R."/>
            <person name="Cruzado L."/>
            <person name="Jimenez J."/>
            <person name="Sanchez M."/>
            <person name="del Rey F."/>
            <person name="Benito J."/>
            <person name="Dominguez A."/>
            <person name="Revuelta J.L."/>
            <person name="Moreno S."/>
            <person name="Armstrong J."/>
            <person name="Forsburg S.L."/>
            <person name="Cerutti L."/>
            <person name="Lowe T."/>
            <person name="McCombie W.R."/>
            <person name="Paulsen I."/>
            <person name="Potashkin J."/>
            <person name="Shpakovski G.V."/>
            <person name="Ussery D."/>
            <person name="Barrell B.G."/>
            <person name="Nurse P."/>
        </authorList>
    </citation>
    <scope>NUCLEOTIDE SEQUENCE [LARGE SCALE GENOMIC DNA]</scope>
    <source>
        <strain>972 / ATCC 24843</strain>
    </source>
</reference>
<reference key="2">
    <citation type="journal article" date="2006" name="Nat. Biotechnol.">
        <title>ORFeome cloning and global analysis of protein localization in the fission yeast Schizosaccharomyces pombe.</title>
        <authorList>
            <person name="Matsuyama A."/>
            <person name="Arai R."/>
            <person name="Yashiroda Y."/>
            <person name="Shirai A."/>
            <person name="Kamata A."/>
            <person name="Sekido S."/>
            <person name="Kobayashi Y."/>
            <person name="Hashimoto A."/>
            <person name="Hamamoto M."/>
            <person name="Hiraoka Y."/>
            <person name="Horinouchi S."/>
            <person name="Yoshida M."/>
        </authorList>
    </citation>
    <scope>SUBCELLULAR LOCATION [LARGE SCALE ANALYSIS]</scope>
</reference>
<evidence type="ECO:0000255" key="1">
    <source>
        <dbReference type="PROSITE-ProRule" id="PRU00448"/>
    </source>
</evidence>
<evidence type="ECO:0000269" key="2">
    <source>
    </source>
</evidence>
<accession>O94455</accession>
<gene>
    <name type="ORF">SPAC1687.14c</name>
</gene>
<name>YFFE_SCHPO</name>
<protein>
    <recommendedName>
        <fullName>Uncharacterized calcium-binding protein C1687.14c</fullName>
    </recommendedName>
</protein>
<proteinExistence type="predicted"/>
<keyword id="KW-0106">Calcium</keyword>
<keyword id="KW-0963">Cytoplasm</keyword>
<keyword id="KW-0539">Nucleus</keyword>
<keyword id="KW-1185">Reference proteome</keyword>
<keyword id="KW-0677">Repeat</keyword>
<organism>
    <name type="scientific">Schizosaccharomyces pombe (strain 972 / ATCC 24843)</name>
    <name type="common">Fission yeast</name>
    <dbReference type="NCBI Taxonomy" id="284812"/>
    <lineage>
        <taxon>Eukaryota</taxon>
        <taxon>Fungi</taxon>
        <taxon>Dikarya</taxon>
        <taxon>Ascomycota</taxon>
        <taxon>Taphrinomycotina</taxon>
        <taxon>Schizosaccharomycetes</taxon>
        <taxon>Schizosaccharomycetales</taxon>
        <taxon>Schizosaccharomycetaceae</taxon>
        <taxon>Schizosaccharomyces</taxon>
    </lineage>
</organism>
<dbReference type="EMBL" id="CU329670">
    <property type="protein sequence ID" value="CAA22608.1"/>
    <property type="molecule type" value="Genomic_DNA"/>
</dbReference>
<dbReference type="PIR" id="T37757">
    <property type="entry name" value="T37757"/>
</dbReference>
<dbReference type="RefSeq" id="NP_593132.1">
    <property type="nucleotide sequence ID" value="NM_001018528.2"/>
</dbReference>
<dbReference type="SMR" id="O94455"/>
<dbReference type="BioGRID" id="278587">
    <property type="interactions" value="30"/>
</dbReference>
<dbReference type="FunCoup" id="O94455">
    <property type="interactions" value="5"/>
</dbReference>
<dbReference type="STRING" id="284812.O94455"/>
<dbReference type="PaxDb" id="4896-SPAC1687.14c.1"/>
<dbReference type="EnsemblFungi" id="SPAC1687.14c.1">
    <property type="protein sequence ID" value="SPAC1687.14c.1:pep"/>
    <property type="gene ID" value="SPAC1687.14c"/>
</dbReference>
<dbReference type="KEGG" id="spo:2542111"/>
<dbReference type="PomBase" id="SPAC1687.14c"/>
<dbReference type="VEuPathDB" id="FungiDB:SPAC1687.14c"/>
<dbReference type="HOGENOM" id="CLU_2639488_0_0_1"/>
<dbReference type="InParanoid" id="O94455"/>
<dbReference type="OMA" id="FAELWIH"/>
<dbReference type="PRO" id="PR:O94455"/>
<dbReference type="Proteomes" id="UP000002485">
    <property type="component" value="Chromosome I"/>
</dbReference>
<dbReference type="GO" id="GO:0005814">
    <property type="term" value="C:centriole"/>
    <property type="evidence" value="ECO:0000318"/>
    <property type="project" value="GO_Central"/>
</dbReference>
<dbReference type="GO" id="GO:0005829">
    <property type="term" value="C:cytosol"/>
    <property type="evidence" value="ECO:0007005"/>
    <property type="project" value="PomBase"/>
</dbReference>
<dbReference type="GO" id="GO:0044732">
    <property type="term" value="C:mitotic spindle pole body"/>
    <property type="evidence" value="ECO:0007005"/>
    <property type="project" value="PomBase"/>
</dbReference>
<dbReference type="GO" id="GO:0005634">
    <property type="term" value="C:nucleus"/>
    <property type="evidence" value="ECO:0007005"/>
    <property type="project" value="PomBase"/>
</dbReference>
<dbReference type="GO" id="GO:0005509">
    <property type="term" value="F:calcium ion binding"/>
    <property type="evidence" value="ECO:0000318"/>
    <property type="project" value="GO_Central"/>
</dbReference>
<dbReference type="GO" id="GO:0000226">
    <property type="term" value="P:microtubule cytoskeleton organization"/>
    <property type="evidence" value="ECO:0000318"/>
    <property type="project" value="GO_Central"/>
</dbReference>
<dbReference type="GO" id="GO:0051300">
    <property type="term" value="P:spindle pole body organization"/>
    <property type="evidence" value="ECO:0000266"/>
    <property type="project" value="PomBase"/>
</dbReference>
<dbReference type="CDD" id="cd00051">
    <property type="entry name" value="EFh"/>
    <property type="match status" value="1"/>
</dbReference>
<dbReference type="FunFam" id="1.10.238.10:FF:000435">
    <property type="entry name" value="WGS project CABT00000000 data, contig 2.2"/>
    <property type="match status" value="1"/>
</dbReference>
<dbReference type="Gene3D" id="1.10.238.10">
    <property type="entry name" value="EF-hand"/>
    <property type="match status" value="1"/>
</dbReference>
<dbReference type="InterPro" id="IPR050145">
    <property type="entry name" value="Centrin_CML-like"/>
</dbReference>
<dbReference type="InterPro" id="IPR011992">
    <property type="entry name" value="EF-hand-dom_pair"/>
</dbReference>
<dbReference type="InterPro" id="IPR002048">
    <property type="entry name" value="EF_hand_dom"/>
</dbReference>
<dbReference type="PANTHER" id="PTHR23050">
    <property type="entry name" value="CALCIUM BINDING PROTEIN"/>
    <property type="match status" value="1"/>
</dbReference>
<dbReference type="Pfam" id="PF13499">
    <property type="entry name" value="EF-hand_7"/>
    <property type="match status" value="1"/>
</dbReference>
<dbReference type="SUPFAM" id="SSF47473">
    <property type="entry name" value="EF-hand"/>
    <property type="match status" value="1"/>
</dbReference>
<dbReference type="PROSITE" id="PS50222">
    <property type="entry name" value="EF_HAND_2"/>
    <property type="match status" value="2"/>
</dbReference>